<accession>Q8DEJ8</accession>
<sequence>MGLFSRRAIGNQYESLAKEYLQRQGLRFIEANFTTKVGEIDLIFKEAQTIVFVEVKYRKNSCYGDAAEMVNPAKANKLIKTAYLWLNKHGYNACNTAMRFDVVAIHSNGHDINWIANAITQG</sequence>
<name>Y590_VIBVU</name>
<dbReference type="EMBL" id="AE016795">
    <property type="protein sequence ID" value="AAO09106.1"/>
    <property type="molecule type" value="Genomic_DNA"/>
</dbReference>
<dbReference type="RefSeq" id="WP_011078675.1">
    <property type="nucleotide sequence ID" value="NC_004459.3"/>
</dbReference>
<dbReference type="SMR" id="Q8DEJ8"/>
<dbReference type="KEGG" id="vvu:VV1_0590"/>
<dbReference type="HOGENOM" id="CLU_115353_1_1_6"/>
<dbReference type="Proteomes" id="UP000002275">
    <property type="component" value="Chromosome 1"/>
</dbReference>
<dbReference type="GO" id="GO:0003676">
    <property type="term" value="F:nucleic acid binding"/>
    <property type="evidence" value="ECO:0007669"/>
    <property type="project" value="InterPro"/>
</dbReference>
<dbReference type="CDD" id="cd20736">
    <property type="entry name" value="PoNe_Nuclease"/>
    <property type="match status" value="1"/>
</dbReference>
<dbReference type="Gene3D" id="3.40.1350.10">
    <property type="match status" value="1"/>
</dbReference>
<dbReference type="HAMAP" id="MF_00048">
    <property type="entry name" value="UPF0102"/>
    <property type="match status" value="1"/>
</dbReference>
<dbReference type="InterPro" id="IPR011335">
    <property type="entry name" value="Restrct_endonuc-II-like"/>
</dbReference>
<dbReference type="InterPro" id="IPR011856">
    <property type="entry name" value="tRNA_endonuc-like_dom_sf"/>
</dbReference>
<dbReference type="InterPro" id="IPR003509">
    <property type="entry name" value="UPF0102_YraN-like"/>
</dbReference>
<dbReference type="NCBIfam" id="NF009150">
    <property type="entry name" value="PRK12497.1-3"/>
    <property type="match status" value="1"/>
</dbReference>
<dbReference type="NCBIfam" id="TIGR00252">
    <property type="entry name" value="YraN family protein"/>
    <property type="match status" value="1"/>
</dbReference>
<dbReference type="PANTHER" id="PTHR34039">
    <property type="entry name" value="UPF0102 PROTEIN YRAN"/>
    <property type="match status" value="1"/>
</dbReference>
<dbReference type="PANTHER" id="PTHR34039:SF1">
    <property type="entry name" value="UPF0102 PROTEIN YRAN"/>
    <property type="match status" value="1"/>
</dbReference>
<dbReference type="Pfam" id="PF02021">
    <property type="entry name" value="UPF0102"/>
    <property type="match status" value="1"/>
</dbReference>
<dbReference type="SUPFAM" id="SSF52980">
    <property type="entry name" value="Restriction endonuclease-like"/>
    <property type="match status" value="1"/>
</dbReference>
<evidence type="ECO:0000255" key="1">
    <source>
        <dbReference type="HAMAP-Rule" id="MF_00048"/>
    </source>
</evidence>
<organism>
    <name type="scientific">Vibrio vulnificus (strain CMCP6)</name>
    <dbReference type="NCBI Taxonomy" id="216895"/>
    <lineage>
        <taxon>Bacteria</taxon>
        <taxon>Pseudomonadati</taxon>
        <taxon>Pseudomonadota</taxon>
        <taxon>Gammaproteobacteria</taxon>
        <taxon>Vibrionales</taxon>
        <taxon>Vibrionaceae</taxon>
        <taxon>Vibrio</taxon>
    </lineage>
</organism>
<reference key="1">
    <citation type="submission" date="2002-12" db="EMBL/GenBank/DDBJ databases">
        <title>Complete genome sequence of Vibrio vulnificus CMCP6.</title>
        <authorList>
            <person name="Rhee J.H."/>
            <person name="Kim S.Y."/>
            <person name="Chung S.S."/>
            <person name="Kim J.J."/>
            <person name="Moon Y.H."/>
            <person name="Jeong H."/>
            <person name="Choy H.E."/>
        </authorList>
    </citation>
    <scope>NUCLEOTIDE SEQUENCE [LARGE SCALE GENOMIC DNA]</scope>
    <source>
        <strain>CMCP6</strain>
    </source>
</reference>
<gene>
    <name type="ordered locus">VV1_0590</name>
</gene>
<comment type="similarity">
    <text evidence="1">Belongs to the UPF0102 family.</text>
</comment>
<proteinExistence type="inferred from homology"/>
<protein>
    <recommendedName>
        <fullName evidence="1">UPF0102 protein VV1_0590</fullName>
    </recommendedName>
</protein>
<feature type="chain" id="PRO_0000167390" description="UPF0102 protein VV1_0590">
    <location>
        <begin position="1"/>
        <end position="122"/>
    </location>
</feature>